<organism>
    <name type="scientific">Methanococcoides burtonii (strain DSM 6242 / NBRC 107633 / OCM 468 / ACE-M)</name>
    <dbReference type="NCBI Taxonomy" id="259564"/>
    <lineage>
        <taxon>Archaea</taxon>
        <taxon>Methanobacteriati</taxon>
        <taxon>Methanobacteriota</taxon>
        <taxon>Stenosarchaea group</taxon>
        <taxon>Methanomicrobia</taxon>
        <taxon>Methanosarcinales</taxon>
        <taxon>Methanosarcinaceae</taxon>
        <taxon>Methanococcoides</taxon>
    </lineage>
</organism>
<evidence type="ECO:0000255" key="1">
    <source>
        <dbReference type="HAMAP-Rule" id="MF_00308"/>
    </source>
</evidence>
<evidence type="ECO:0000305" key="2"/>
<name>PFDA_METBU</name>
<accession>Q12ZJ7</accession>
<feature type="chain" id="PRO_0000300763" description="Prefoldin subunit alpha">
    <location>
        <begin position="1"/>
        <end position="138"/>
    </location>
</feature>
<comment type="function">
    <text evidence="1">Molecular chaperone capable of stabilizing a range of proteins. Seems to fulfill an ATP-independent, HSP70-like function in archaeal de novo protein folding.</text>
</comment>
<comment type="subunit">
    <text evidence="1">Heterohexamer of two alpha and four beta subunits.</text>
</comment>
<comment type="subcellular location">
    <subcellularLocation>
        <location evidence="1">Cytoplasm</location>
    </subcellularLocation>
</comment>
<comment type="similarity">
    <text evidence="2">Belongs to the prefoldin subunit alpha family.</text>
</comment>
<protein>
    <recommendedName>
        <fullName evidence="1">Prefoldin subunit alpha</fullName>
    </recommendedName>
    <alternativeName>
        <fullName evidence="1">GimC subunit alpha</fullName>
    </alternativeName>
</protein>
<keyword id="KW-0143">Chaperone</keyword>
<keyword id="KW-0963">Cytoplasm</keyword>
<dbReference type="EMBL" id="CP000300">
    <property type="protein sequence ID" value="ABE51129.1"/>
    <property type="molecule type" value="Genomic_DNA"/>
</dbReference>
<dbReference type="RefSeq" id="WP_011498293.1">
    <property type="nucleotide sequence ID" value="NC_007955.1"/>
</dbReference>
<dbReference type="SMR" id="Q12ZJ7"/>
<dbReference type="STRING" id="259564.Mbur_0111"/>
<dbReference type="GeneID" id="3998220"/>
<dbReference type="KEGG" id="mbu:Mbur_0111"/>
<dbReference type="HOGENOM" id="CLU_091867_1_1_2"/>
<dbReference type="OrthoDB" id="10045at2157"/>
<dbReference type="Proteomes" id="UP000001979">
    <property type="component" value="Chromosome"/>
</dbReference>
<dbReference type="GO" id="GO:0005737">
    <property type="term" value="C:cytoplasm"/>
    <property type="evidence" value="ECO:0007669"/>
    <property type="project" value="UniProtKB-SubCell"/>
</dbReference>
<dbReference type="GO" id="GO:0016272">
    <property type="term" value="C:prefoldin complex"/>
    <property type="evidence" value="ECO:0007669"/>
    <property type="project" value="UniProtKB-UniRule"/>
</dbReference>
<dbReference type="GO" id="GO:0051082">
    <property type="term" value="F:unfolded protein binding"/>
    <property type="evidence" value="ECO:0007669"/>
    <property type="project" value="UniProtKB-UniRule"/>
</dbReference>
<dbReference type="GO" id="GO:0006457">
    <property type="term" value="P:protein folding"/>
    <property type="evidence" value="ECO:0007669"/>
    <property type="project" value="UniProtKB-UniRule"/>
</dbReference>
<dbReference type="CDD" id="cd23160">
    <property type="entry name" value="Prefoldin_alpha_GimC"/>
    <property type="match status" value="1"/>
</dbReference>
<dbReference type="Gene3D" id="1.10.287.370">
    <property type="match status" value="1"/>
</dbReference>
<dbReference type="HAMAP" id="MF_00308">
    <property type="entry name" value="PfdA"/>
    <property type="match status" value="1"/>
</dbReference>
<dbReference type="InterPro" id="IPR011599">
    <property type="entry name" value="PFD_alpha_archaea"/>
</dbReference>
<dbReference type="InterPro" id="IPR009053">
    <property type="entry name" value="Prefoldin"/>
</dbReference>
<dbReference type="InterPro" id="IPR004127">
    <property type="entry name" value="Prefoldin_subunit_alpha"/>
</dbReference>
<dbReference type="NCBIfam" id="TIGR00293">
    <property type="entry name" value="prefoldin subunit alpha"/>
    <property type="match status" value="1"/>
</dbReference>
<dbReference type="PANTHER" id="PTHR12674">
    <property type="entry name" value="PREFOLDIN SUBUNIT 5"/>
    <property type="match status" value="1"/>
</dbReference>
<dbReference type="PANTHER" id="PTHR12674:SF4">
    <property type="entry name" value="PREFOLDIN SUBUNIT ALPHA 2"/>
    <property type="match status" value="1"/>
</dbReference>
<dbReference type="Pfam" id="PF02996">
    <property type="entry name" value="Prefoldin"/>
    <property type="match status" value="1"/>
</dbReference>
<dbReference type="SUPFAM" id="SSF46579">
    <property type="entry name" value="Prefoldin"/>
    <property type="match status" value="1"/>
</dbReference>
<proteinExistence type="inferred from homology"/>
<reference key="1">
    <citation type="journal article" date="2009" name="ISME J.">
        <title>The genome sequence of the psychrophilic archaeon, Methanococcoides burtonii: the role of genome evolution in cold adaptation.</title>
        <authorList>
            <person name="Allen M.A."/>
            <person name="Lauro F.M."/>
            <person name="Williams T.J."/>
            <person name="Burg D."/>
            <person name="Siddiqui K.S."/>
            <person name="De Francisci D."/>
            <person name="Chong K.W."/>
            <person name="Pilak O."/>
            <person name="Chew H.H."/>
            <person name="De Maere M.Z."/>
            <person name="Ting L."/>
            <person name="Katrib M."/>
            <person name="Ng C."/>
            <person name="Sowers K.R."/>
            <person name="Galperin M.Y."/>
            <person name="Anderson I.J."/>
            <person name="Ivanova N."/>
            <person name="Dalin E."/>
            <person name="Martinez M."/>
            <person name="Lapidus A."/>
            <person name="Hauser L."/>
            <person name="Land M."/>
            <person name="Thomas T."/>
            <person name="Cavicchioli R."/>
        </authorList>
    </citation>
    <scope>NUCLEOTIDE SEQUENCE [LARGE SCALE GENOMIC DNA]</scope>
    <source>
        <strain>DSM 6242 / NBRC 107633 / OCM 468 / ACE-M</strain>
    </source>
</reference>
<gene>
    <name evidence="1" type="primary">pfdA</name>
    <name type="ordered locus">Mbur_0111</name>
</gene>
<sequence>MSETSEQDARNLAAQHRELQQNAESVNQQLGMVQMSIEDCTRAILTLEELKSASGAINTMIPLGAGALIHANIADVDKIVVSVGAGISVEKTPTEAIETLTQRKEELGKVVERLNGTLTQIGQRLASIESAVGNRPPQ</sequence>